<protein>
    <recommendedName>
        <fullName evidence="1">Phosphomethylpyrimidine synthase</fullName>
        <ecNumber evidence="1">4.1.99.17</ecNumber>
    </recommendedName>
    <alternativeName>
        <fullName evidence="1">Hydroxymethylpyrimidine phosphate synthase</fullName>
        <shortName evidence="1">HMP-P synthase</shortName>
        <shortName evidence="1">HMP-phosphate synthase</shortName>
        <shortName evidence="1">HMPP synthase</shortName>
    </alternativeName>
    <alternativeName>
        <fullName evidence="1">Thiamine biosynthesis protein ThiC</fullName>
    </alternativeName>
</protein>
<reference key="1">
    <citation type="journal article" date="2001" name="Nature">
        <title>Genome sequence of enterohaemorrhagic Escherichia coli O157:H7.</title>
        <authorList>
            <person name="Perna N.T."/>
            <person name="Plunkett G. III"/>
            <person name="Burland V."/>
            <person name="Mau B."/>
            <person name="Glasner J.D."/>
            <person name="Rose D.J."/>
            <person name="Mayhew G.F."/>
            <person name="Evans P.S."/>
            <person name="Gregor J."/>
            <person name="Kirkpatrick H.A."/>
            <person name="Posfai G."/>
            <person name="Hackett J."/>
            <person name="Klink S."/>
            <person name="Boutin A."/>
            <person name="Shao Y."/>
            <person name="Miller L."/>
            <person name="Grotbeck E.J."/>
            <person name="Davis N.W."/>
            <person name="Lim A."/>
            <person name="Dimalanta E.T."/>
            <person name="Potamousis K."/>
            <person name="Apodaca J."/>
            <person name="Anantharaman T.S."/>
            <person name="Lin J."/>
            <person name="Yen G."/>
            <person name="Schwartz D.C."/>
            <person name="Welch R.A."/>
            <person name="Blattner F.R."/>
        </authorList>
    </citation>
    <scope>NUCLEOTIDE SEQUENCE [LARGE SCALE GENOMIC DNA]</scope>
    <source>
        <strain>O157:H7 / EDL933 / ATCC 700927 / EHEC</strain>
    </source>
</reference>
<reference key="2">
    <citation type="journal article" date="2001" name="DNA Res.">
        <title>Complete genome sequence of enterohemorrhagic Escherichia coli O157:H7 and genomic comparison with a laboratory strain K-12.</title>
        <authorList>
            <person name="Hayashi T."/>
            <person name="Makino K."/>
            <person name="Ohnishi M."/>
            <person name="Kurokawa K."/>
            <person name="Ishii K."/>
            <person name="Yokoyama K."/>
            <person name="Han C.-G."/>
            <person name="Ohtsubo E."/>
            <person name="Nakayama K."/>
            <person name="Murata T."/>
            <person name="Tanaka M."/>
            <person name="Tobe T."/>
            <person name="Iida T."/>
            <person name="Takami H."/>
            <person name="Honda T."/>
            <person name="Sasakawa C."/>
            <person name="Ogasawara N."/>
            <person name="Yasunaga T."/>
            <person name="Kuhara S."/>
            <person name="Shiba T."/>
            <person name="Hattori M."/>
            <person name="Shinagawa H."/>
        </authorList>
    </citation>
    <scope>NUCLEOTIDE SEQUENCE [LARGE SCALE GENOMIC DNA]</scope>
    <source>
        <strain>O157:H7 / Sakai / RIMD 0509952 / EHEC</strain>
    </source>
</reference>
<dbReference type="EC" id="4.1.99.17" evidence="1"/>
<dbReference type="EMBL" id="AE005174">
    <property type="protein sequence ID" value="AAG59191.1"/>
    <property type="molecule type" value="Genomic_DNA"/>
</dbReference>
<dbReference type="EMBL" id="BA000007">
    <property type="protein sequence ID" value="BAB38340.1"/>
    <property type="molecule type" value="Genomic_DNA"/>
</dbReference>
<dbReference type="PIR" id="C86091">
    <property type="entry name" value="C86091"/>
</dbReference>
<dbReference type="PIR" id="E91243">
    <property type="entry name" value="E91243"/>
</dbReference>
<dbReference type="RefSeq" id="NP_312944.1">
    <property type="nucleotide sequence ID" value="NC_002695.1"/>
</dbReference>
<dbReference type="RefSeq" id="WP_001276909.1">
    <property type="nucleotide sequence ID" value="NZ_VOAI01000037.1"/>
</dbReference>
<dbReference type="SMR" id="Q8X6X9"/>
<dbReference type="STRING" id="155864.Z5569"/>
<dbReference type="GeneID" id="914937"/>
<dbReference type="KEGG" id="ece:Z5569"/>
<dbReference type="KEGG" id="ecs:ECs_4917"/>
<dbReference type="PATRIC" id="fig|386585.9.peg.5142"/>
<dbReference type="eggNOG" id="COG0422">
    <property type="taxonomic scope" value="Bacteria"/>
</dbReference>
<dbReference type="HOGENOM" id="CLU_013181_2_1_6"/>
<dbReference type="OMA" id="FDWNKQF"/>
<dbReference type="UniPathway" id="UPA00060"/>
<dbReference type="Proteomes" id="UP000000558">
    <property type="component" value="Chromosome"/>
</dbReference>
<dbReference type="Proteomes" id="UP000002519">
    <property type="component" value="Chromosome"/>
</dbReference>
<dbReference type="GO" id="GO:0005829">
    <property type="term" value="C:cytosol"/>
    <property type="evidence" value="ECO:0007669"/>
    <property type="project" value="TreeGrafter"/>
</dbReference>
<dbReference type="GO" id="GO:0051539">
    <property type="term" value="F:4 iron, 4 sulfur cluster binding"/>
    <property type="evidence" value="ECO:0007669"/>
    <property type="project" value="UniProtKB-KW"/>
</dbReference>
<dbReference type="GO" id="GO:0016830">
    <property type="term" value="F:carbon-carbon lyase activity"/>
    <property type="evidence" value="ECO:0007669"/>
    <property type="project" value="InterPro"/>
</dbReference>
<dbReference type="GO" id="GO:0008270">
    <property type="term" value="F:zinc ion binding"/>
    <property type="evidence" value="ECO:0007669"/>
    <property type="project" value="UniProtKB-UniRule"/>
</dbReference>
<dbReference type="GO" id="GO:0009228">
    <property type="term" value="P:thiamine biosynthetic process"/>
    <property type="evidence" value="ECO:0007669"/>
    <property type="project" value="UniProtKB-KW"/>
</dbReference>
<dbReference type="GO" id="GO:0009229">
    <property type="term" value="P:thiamine diphosphate biosynthetic process"/>
    <property type="evidence" value="ECO:0007669"/>
    <property type="project" value="UniProtKB-UniRule"/>
</dbReference>
<dbReference type="FunFam" id="3.20.20.540:FF:000001">
    <property type="entry name" value="Phosphomethylpyrimidine synthase"/>
    <property type="match status" value="1"/>
</dbReference>
<dbReference type="Gene3D" id="6.10.250.620">
    <property type="match status" value="1"/>
</dbReference>
<dbReference type="Gene3D" id="3.20.20.540">
    <property type="entry name" value="Radical SAM ThiC family, central domain"/>
    <property type="match status" value="1"/>
</dbReference>
<dbReference type="HAMAP" id="MF_00089">
    <property type="entry name" value="ThiC"/>
    <property type="match status" value="1"/>
</dbReference>
<dbReference type="InterPro" id="IPR037509">
    <property type="entry name" value="ThiC"/>
</dbReference>
<dbReference type="InterPro" id="IPR025747">
    <property type="entry name" value="ThiC-associated_dom"/>
</dbReference>
<dbReference type="InterPro" id="IPR038521">
    <property type="entry name" value="ThiC/Bza_core_dom"/>
</dbReference>
<dbReference type="InterPro" id="IPR002817">
    <property type="entry name" value="ThiC/BzaA/B"/>
</dbReference>
<dbReference type="NCBIfam" id="NF006763">
    <property type="entry name" value="PRK09284.1"/>
    <property type="match status" value="1"/>
</dbReference>
<dbReference type="NCBIfam" id="NF009895">
    <property type="entry name" value="PRK13352.1"/>
    <property type="match status" value="1"/>
</dbReference>
<dbReference type="NCBIfam" id="TIGR00190">
    <property type="entry name" value="thiC"/>
    <property type="match status" value="1"/>
</dbReference>
<dbReference type="PANTHER" id="PTHR30557:SF1">
    <property type="entry name" value="PHOSPHOMETHYLPYRIMIDINE SYNTHASE, CHLOROPLASTIC"/>
    <property type="match status" value="1"/>
</dbReference>
<dbReference type="PANTHER" id="PTHR30557">
    <property type="entry name" value="THIAMINE BIOSYNTHESIS PROTEIN THIC"/>
    <property type="match status" value="1"/>
</dbReference>
<dbReference type="Pfam" id="PF13667">
    <property type="entry name" value="ThiC-associated"/>
    <property type="match status" value="1"/>
</dbReference>
<dbReference type="Pfam" id="PF01964">
    <property type="entry name" value="ThiC_Rad_SAM"/>
    <property type="match status" value="1"/>
</dbReference>
<dbReference type="SFLD" id="SFLDF00407">
    <property type="entry name" value="phosphomethylpyrimidine_syntha"/>
    <property type="match status" value="1"/>
</dbReference>
<dbReference type="SFLD" id="SFLDG01114">
    <property type="entry name" value="phosphomethylpyrimidine_syntha"/>
    <property type="match status" value="1"/>
</dbReference>
<dbReference type="SFLD" id="SFLDS00113">
    <property type="entry name" value="Radical_SAM_Phosphomethylpyrim"/>
    <property type="match status" value="1"/>
</dbReference>
<evidence type="ECO:0000255" key="1">
    <source>
        <dbReference type="HAMAP-Rule" id="MF_00089"/>
    </source>
</evidence>
<comment type="function">
    <text evidence="1">Catalyzes the synthesis of the hydroxymethylpyrimidine phosphate (HMP-P) moiety of thiamine from aminoimidazole ribotide (AIR) in a radical S-adenosyl-L-methionine (SAM)-dependent reaction.</text>
</comment>
<comment type="catalytic activity">
    <reaction evidence="1">
        <text>5-amino-1-(5-phospho-beta-D-ribosyl)imidazole + S-adenosyl-L-methionine = 4-amino-2-methyl-5-(phosphooxymethyl)pyrimidine + CO + 5'-deoxyadenosine + formate + L-methionine + 3 H(+)</text>
        <dbReference type="Rhea" id="RHEA:24840"/>
        <dbReference type="ChEBI" id="CHEBI:15378"/>
        <dbReference type="ChEBI" id="CHEBI:15740"/>
        <dbReference type="ChEBI" id="CHEBI:17245"/>
        <dbReference type="ChEBI" id="CHEBI:17319"/>
        <dbReference type="ChEBI" id="CHEBI:57844"/>
        <dbReference type="ChEBI" id="CHEBI:58354"/>
        <dbReference type="ChEBI" id="CHEBI:59789"/>
        <dbReference type="ChEBI" id="CHEBI:137981"/>
        <dbReference type="EC" id="4.1.99.17"/>
    </reaction>
</comment>
<comment type="cofactor">
    <cofactor evidence="1">
        <name>[4Fe-4S] cluster</name>
        <dbReference type="ChEBI" id="CHEBI:49883"/>
    </cofactor>
    <text evidence="1">Binds 1 [4Fe-4S] cluster per subunit. The cluster is coordinated with 3 cysteines and an exchangeable S-adenosyl-L-methionine.</text>
</comment>
<comment type="pathway">
    <text evidence="1">Cofactor biosynthesis; thiamine diphosphate biosynthesis.</text>
</comment>
<comment type="subunit">
    <text evidence="1">Homodimer.</text>
</comment>
<comment type="similarity">
    <text evidence="1">Belongs to the ThiC family.</text>
</comment>
<gene>
    <name evidence="1" type="primary">thiC</name>
    <name type="ordered locus">Z5569</name>
    <name type="ordered locus">ECs4917</name>
</gene>
<proteinExistence type="inferred from homology"/>
<organism>
    <name type="scientific">Escherichia coli O157:H7</name>
    <dbReference type="NCBI Taxonomy" id="83334"/>
    <lineage>
        <taxon>Bacteria</taxon>
        <taxon>Pseudomonadati</taxon>
        <taxon>Pseudomonadota</taxon>
        <taxon>Gammaproteobacteria</taxon>
        <taxon>Enterobacterales</taxon>
        <taxon>Enterobacteriaceae</taxon>
        <taxon>Escherichia</taxon>
    </lineage>
</organism>
<feature type="chain" id="PRO_0000152806" description="Phosphomethylpyrimidine synthase">
    <location>
        <begin position="1"/>
        <end position="631"/>
    </location>
</feature>
<feature type="binding site" evidence="1">
    <location>
        <position position="239"/>
    </location>
    <ligand>
        <name>substrate</name>
    </ligand>
</feature>
<feature type="binding site" evidence="1">
    <location>
        <position position="268"/>
    </location>
    <ligand>
        <name>substrate</name>
    </ligand>
</feature>
<feature type="binding site" evidence="1">
    <location>
        <position position="297"/>
    </location>
    <ligand>
        <name>substrate</name>
    </ligand>
</feature>
<feature type="binding site" evidence="1">
    <location>
        <position position="333"/>
    </location>
    <ligand>
        <name>substrate</name>
    </ligand>
</feature>
<feature type="binding site" evidence="1">
    <location>
        <begin position="353"/>
        <end position="355"/>
    </location>
    <ligand>
        <name>substrate</name>
    </ligand>
</feature>
<feature type="binding site" evidence="1">
    <location>
        <begin position="394"/>
        <end position="397"/>
    </location>
    <ligand>
        <name>substrate</name>
    </ligand>
</feature>
<feature type="binding site" evidence="1">
    <location>
        <position position="433"/>
    </location>
    <ligand>
        <name>substrate</name>
    </ligand>
</feature>
<feature type="binding site" evidence="1">
    <location>
        <position position="437"/>
    </location>
    <ligand>
        <name>Zn(2+)</name>
        <dbReference type="ChEBI" id="CHEBI:29105"/>
    </ligand>
</feature>
<feature type="binding site" evidence="1">
    <location>
        <position position="460"/>
    </location>
    <ligand>
        <name>substrate</name>
    </ligand>
</feature>
<feature type="binding site" evidence="1">
    <location>
        <position position="501"/>
    </location>
    <ligand>
        <name>Zn(2+)</name>
        <dbReference type="ChEBI" id="CHEBI:29105"/>
    </ligand>
</feature>
<feature type="binding site" evidence="1">
    <location>
        <position position="581"/>
    </location>
    <ligand>
        <name>[4Fe-4S] cluster</name>
        <dbReference type="ChEBI" id="CHEBI:49883"/>
        <note>4Fe-4S-S-AdoMet</note>
    </ligand>
</feature>
<feature type="binding site" evidence="1">
    <location>
        <position position="584"/>
    </location>
    <ligand>
        <name>[4Fe-4S] cluster</name>
        <dbReference type="ChEBI" id="CHEBI:49883"/>
        <note>4Fe-4S-S-AdoMet</note>
    </ligand>
</feature>
<feature type="binding site" evidence="1">
    <location>
        <position position="589"/>
    </location>
    <ligand>
        <name>[4Fe-4S] cluster</name>
        <dbReference type="ChEBI" id="CHEBI:49883"/>
        <note>4Fe-4S-S-AdoMet</note>
    </ligand>
</feature>
<sequence>MSATKLTRREQRAQAQHFIDTLEGTAFPNSKRIYITGTQPGVRVPMREIQLSPTLIGGSKEQPQYEENEAIPVYDTSGPYGDPQIAINVQQGLAKLRQPWIDARGDTEELTVRSSDYTKARLADDGLDELRFSGVLTPKRAKAGRRVTQLHYARQGIITPEMEFIAIRENMGRERIRSEVLRHQHPGMSFGARLPENITAEFVRDEVAAGRAIIPANINHPESEPMIIGRNFLVKVNANIGNSAVTSSIEEEVEKLVWSTRWGADTVMDLSTGRYIHETREWILRNSPVPIGTVPIYQALEKVNGIAEDLTWEAFRDTLLEQAEQGVDYFTIHAGVLLRYVPMTAKRLTGIVSRGGSIMAKWCLSHHQENFLYQHFREICEICAAYDVSLSLGDGLRPGSIQDANDEAQFAELHTLGELTKIAWEYDVQVMIEGPGHVPMQMIRRNMTEELEHCHEAPFYTLGPLTTDIAPGYDHFTSGIGAAMIGWFGCAMLCYVTPKEHLGLPNKEDVKQGLITYKIAAHAADLAKGHPGAQIRDNAMSKARFEFRWEDQFNLALDPFTARAYHDETLPQESGKVAHFCSMCGPKFCSMKISQEVRDYAATQTIEMGIADMSENFRARGGEIYLRKEEA</sequence>
<accession>Q8X6X9</accession>
<keyword id="KW-0004">4Fe-4S</keyword>
<keyword id="KW-0408">Iron</keyword>
<keyword id="KW-0411">Iron-sulfur</keyword>
<keyword id="KW-0456">Lyase</keyword>
<keyword id="KW-0479">Metal-binding</keyword>
<keyword id="KW-1185">Reference proteome</keyword>
<keyword id="KW-0949">S-adenosyl-L-methionine</keyword>
<keyword id="KW-0784">Thiamine biosynthesis</keyword>
<keyword id="KW-0862">Zinc</keyword>
<name>THIC_ECO57</name>